<protein>
    <recommendedName>
        <fullName>Probable valine--tRNA ligase, mitochondrial</fullName>
        <ecNumber>6.1.1.9</ecNumber>
    </recommendedName>
    <alternativeName>
        <fullName>Valyl-tRNA synthetase</fullName>
        <shortName>ValRS</shortName>
    </alternativeName>
</protein>
<name>SYVM_DICDI</name>
<evidence type="ECO:0000250" key="1"/>
<evidence type="ECO:0000255" key="2"/>
<evidence type="ECO:0000305" key="3"/>
<accession>Q54I78</accession>
<dbReference type="EC" id="6.1.1.9"/>
<dbReference type="EMBL" id="AAFI02000126">
    <property type="protein sequence ID" value="EAL62993.2"/>
    <property type="molecule type" value="Genomic_DNA"/>
</dbReference>
<dbReference type="RefSeq" id="XP_636501.2">
    <property type="nucleotide sequence ID" value="XM_631409.2"/>
</dbReference>
<dbReference type="SMR" id="Q54I78"/>
<dbReference type="FunCoup" id="Q54I78">
    <property type="interactions" value="45"/>
</dbReference>
<dbReference type="STRING" id="44689.Q54I78"/>
<dbReference type="PaxDb" id="44689-DDB0304686"/>
<dbReference type="EnsemblProtists" id="EAL62993">
    <property type="protein sequence ID" value="EAL62993"/>
    <property type="gene ID" value="DDB_G0288939"/>
</dbReference>
<dbReference type="GeneID" id="8626884"/>
<dbReference type="KEGG" id="ddi:DDB_G0288939"/>
<dbReference type="dictyBase" id="DDB_G0288939">
    <property type="gene designation" value="valS2"/>
</dbReference>
<dbReference type="VEuPathDB" id="AmoebaDB:DDB_G0288939"/>
<dbReference type="eggNOG" id="KOG0432">
    <property type="taxonomic scope" value="Eukaryota"/>
</dbReference>
<dbReference type="HOGENOM" id="CLU_001493_0_0_1"/>
<dbReference type="InParanoid" id="Q54I78"/>
<dbReference type="OMA" id="RQWYIRN"/>
<dbReference type="PhylomeDB" id="Q54I78"/>
<dbReference type="PRO" id="PR:Q54I78"/>
<dbReference type="Proteomes" id="UP000002195">
    <property type="component" value="Chromosome 5"/>
</dbReference>
<dbReference type="GO" id="GO:0005829">
    <property type="term" value="C:cytosol"/>
    <property type="evidence" value="ECO:0000318"/>
    <property type="project" value="GO_Central"/>
</dbReference>
<dbReference type="GO" id="GO:0005739">
    <property type="term" value="C:mitochondrion"/>
    <property type="evidence" value="ECO:0007669"/>
    <property type="project" value="UniProtKB-SubCell"/>
</dbReference>
<dbReference type="GO" id="GO:0002161">
    <property type="term" value="F:aminoacyl-tRNA deacylase activity"/>
    <property type="evidence" value="ECO:0007669"/>
    <property type="project" value="InterPro"/>
</dbReference>
<dbReference type="GO" id="GO:0005524">
    <property type="term" value="F:ATP binding"/>
    <property type="evidence" value="ECO:0007669"/>
    <property type="project" value="UniProtKB-KW"/>
</dbReference>
<dbReference type="GO" id="GO:0004832">
    <property type="term" value="F:valine-tRNA ligase activity"/>
    <property type="evidence" value="ECO:0000250"/>
    <property type="project" value="dictyBase"/>
</dbReference>
<dbReference type="GO" id="GO:0006438">
    <property type="term" value="P:valyl-tRNA aminoacylation"/>
    <property type="evidence" value="ECO:0000250"/>
    <property type="project" value="dictyBase"/>
</dbReference>
<dbReference type="CDD" id="cd07962">
    <property type="entry name" value="Anticodon_Ia_Val"/>
    <property type="match status" value="1"/>
</dbReference>
<dbReference type="CDD" id="cd00817">
    <property type="entry name" value="ValRS_core"/>
    <property type="match status" value="1"/>
</dbReference>
<dbReference type="FunFam" id="1.10.730.10:FF:000111">
    <property type="entry name" value="Probable valine--tRNA ligase, mitochondrial"/>
    <property type="match status" value="1"/>
</dbReference>
<dbReference type="FunFam" id="3.40.50.620:FF:000497">
    <property type="entry name" value="Probable valine--tRNA ligase, mitochondrial"/>
    <property type="match status" value="1"/>
</dbReference>
<dbReference type="FunFam" id="3.40.50.620:FF:000499">
    <property type="entry name" value="Probable valine--tRNA ligase, mitochondrial"/>
    <property type="match status" value="1"/>
</dbReference>
<dbReference type="FunFam" id="3.90.740.10:FF:000010">
    <property type="entry name" value="Valine--tRNA ligase"/>
    <property type="match status" value="1"/>
</dbReference>
<dbReference type="Gene3D" id="2.170.220.10">
    <property type="match status" value="1"/>
</dbReference>
<dbReference type="Gene3D" id="3.40.50.620">
    <property type="entry name" value="HUPs"/>
    <property type="match status" value="2"/>
</dbReference>
<dbReference type="Gene3D" id="1.10.730.10">
    <property type="entry name" value="Isoleucyl-tRNA Synthetase, Domain 1"/>
    <property type="match status" value="1"/>
</dbReference>
<dbReference type="Gene3D" id="3.90.740.10">
    <property type="entry name" value="Valyl/Leucyl/Isoleucyl-tRNA synthetase, editing domain"/>
    <property type="match status" value="1"/>
</dbReference>
<dbReference type="HAMAP" id="MF_02004">
    <property type="entry name" value="Val_tRNA_synth_type1"/>
    <property type="match status" value="1"/>
</dbReference>
<dbReference type="InterPro" id="IPR001412">
    <property type="entry name" value="aa-tRNA-synth_I_CS"/>
</dbReference>
<dbReference type="InterPro" id="IPR002300">
    <property type="entry name" value="aa-tRNA-synth_Ia"/>
</dbReference>
<dbReference type="InterPro" id="IPR033705">
    <property type="entry name" value="Anticodon_Ia_Val"/>
</dbReference>
<dbReference type="InterPro" id="IPR013155">
    <property type="entry name" value="M/V/L/I-tRNA-synth_anticd-bd"/>
</dbReference>
<dbReference type="InterPro" id="IPR014729">
    <property type="entry name" value="Rossmann-like_a/b/a_fold"/>
</dbReference>
<dbReference type="InterPro" id="IPR009080">
    <property type="entry name" value="tRNAsynth_Ia_anticodon-bd"/>
</dbReference>
<dbReference type="InterPro" id="IPR009008">
    <property type="entry name" value="Val/Leu/Ile-tRNA-synth_edit"/>
</dbReference>
<dbReference type="InterPro" id="IPR002303">
    <property type="entry name" value="Valyl-tRNA_ligase"/>
</dbReference>
<dbReference type="NCBIfam" id="NF004349">
    <property type="entry name" value="PRK05729.1"/>
    <property type="match status" value="1"/>
</dbReference>
<dbReference type="NCBIfam" id="TIGR00422">
    <property type="entry name" value="valS"/>
    <property type="match status" value="1"/>
</dbReference>
<dbReference type="PANTHER" id="PTHR11946:SF57">
    <property type="entry name" value="VALINE--TRNA LIGASE, MITOCHONDRIAL-RELATED"/>
    <property type="match status" value="1"/>
</dbReference>
<dbReference type="PANTHER" id="PTHR11946">
    <property type="entry name" value="VALYL-TRNA SYNTHETASES"/>
    <property type="match status" value="1"/>
</dbReference>
<dbReference type="Pfam" id="PF08264">
    <property type="entry name" value="Anticodon_1"/>
    <property type="match status" value="1"/>
</dbReference>
<dbReference type="Pfam" id="PF00133">
    <property type="entry name" value="tRNA-synt_1"/>
    <property type="match status" value="1"/>
</dbReference>
<dbReference type="PRINTS" id="PR00986">
    <property type="entry name" value="TRNASYNTHVAL"/>
</dbReference>
<dbReference type="SUPFAM" id="SSF47323">
    <property type="entry name" value="Anticodon-binding domain of a subclass of class I aminoacyl-tRNA synthetases"/>
    <property type="match status" value="1"/>
</dbReference>
<dbReference type="SUPFAM" id="SSF52374">
    <property type="entry name" value="Nucleotidylyl transferase"/>
    <property type="match status" value="1"/>
</dbReference>
<dbReference type="SUPFAM" id="SSF50677">
    <property type="entry name" value="ValRS/IleRS/LeuRS editing domain"/>
    <property type="match status" value="1"/>
</dbReference>
<dbReference type="PROSITE" id="PS00178">
    <property type="entry name" value="AA_TRNA_LIGASE_I"/>
    <property type="match status" value="1"/>
</dbReference>
<organism>
    <name type="scientific">Dictyostelium discoideum</name>
    <name type="common">Social amoeba</name>
    <dbReference type="NCBI Taxonomy" id="44689"/>
    <lineage>
        <taxon>Eukaryota</taxon>
        <taxon>Amoebozoa</taxon>
        <taxon>Evosea</taxon>
        <taxon>Eumycetozoa</taxon>
        <taxon>Dictyostelia</taxon>
        <taxon>Dictyosteliales</taxon>
        <taxon>Dictyosteliaceae</taxon>
        <taxon>Dictyostelium</taxon>
    </lineage>
</organism>
<gene>
    <name type="primary">valS2</name>
    <name type="ORF">DDB_G0288939</name>
</gene>
<comment type="catalytic activity">
    <reaction>
        <text>tRNA(Val) + L-valine + ATP = L-valyl-tRNA(Val) + AMP + diphosphate</text>
        <dbReference type="Rhea" id="RHEA:10704"/>
        <dbReference type="Rhea" id="RHEA-COMP:9672"/>
        <dbReference type="Rhea" id="RHEA-COMP:9708"/>
        <dbReference type="ChEBI" id="CHEBI:30616"/>
        <dbReference type="ChEBI" id="CHEBI:33019"/>
        <dbReference type="ChEBI" id="CHEBI:57762"/>
        <dbReference type="ChEBI" id="CHEBI:78442"/>
        <dbReference type="ChEBI" id="CHEBI:78537"/>
        <dbReference type="ChEBI" id="CHEBI:456215"/>
        <dbReference type="EC" id="6.1.1.9"/>
    </reaction>
</comment>
<comment type="subcellular location">
    <subcellularLocation>
        <location evidence="3">Mitochondrion</location>
    </subcellularLocation>
</comment>
<comment type="similarity">
    <text evidence="3">Belongs to the class-I aminoacyl-tRNA synthetase family.</text>
</comment>
<reference key="1">
    <citation type="journal article" date="2005" name="Nature">
        <title>The genome of the social amoeba Dictyostelium discoideum.</title>
        <authorList>
            <person name="Eichinger L."/>
            <person name="Pachebat J.A."/>
            <person name="Gloeckner G."/>
            <person name="Rajandream M.A."/>
            <person name="Sucgang R."/>
            <person name="Berriman M."/>
            <person name="Song J."/>
            <person name="Olsen R."/>
            <person name="Szafranski K."/>
            <person name="Xu Q."/>
            <person name="Tunggal B."/>
            <person name="Kummerfeld S."/>
            <person name="Madera M."/>
            <person name="Konfortov B.A."/>
            <person name="Rivero F."/>
            <person name="Bankier A.T."/>
            <person name="Lehmann R."/>
            <person name="Hamlin N."/>
            <person name="Davies R."/>
            <person name="Gaudet P."/>
            <person name="Fey P."/>
            <person name="Pilcher K."/>
            <person name="Chen G."/>
            <person name="Saunders D."/>
            <person name="Sodergren E.J."/>
            <person name="Davis P."/>
            <person name="Kerhornou A."/>
            <person name="Nie X."/>
            <person name="Hall N."/>
            <person name="Anjard C."/>
            <person name="Hemphill L."/>
            <person name="Bason N."/>
            <person name="Farbrother P."/>
            <person name="Desany B."/>
            <person name="Just E."/>
            <person name="Morio T."/>
            <person name="Rost R."/>
            <person name="Churcher C.M."/>
            <person name="Cooper J."/>
            <person name="Haydock S."/>
            <person name="van Driessche N."/>
            <person name="Cronin A."/>
            <person name="Goodhead I."/>
            <person name="Muzny D.M."/>
            <person name="Mourier T."/>
            <person name="Pain A."/>
            <person name="Lu M."/>
            <person name="Harper D."/>
            <person name="Lindsay R."/>
            <person name="Hauser H."/>
            <person name="James K.D."/>
            <person name="Quiles M."/>
            <person name="Madan Babu M."/>
            <person name="Saito T."/>
            <person name="Buchrieser C."/>
            <person name="Wardroper A."/>
            <person name="Felder M."/>
            <person name="Thangavelu M."/>
            <person name="Johnson D."/>
            <person name="Knights A."/>
            <person name="Loulseged H."/>
            <person name="Mungall K.L."/>
            <person name="Oliver K."/>
            <person name="Price C."/>
            <person name="Quail M.A."/>
            <person name="Urushihara H."/>
            <person name="Hernandez J."/>
            <person name="Rabbinowitsch E."/>
            <person name="Steffen D."/>
            <person name="Sanders M."/>
            <person name="Ma J."/>
            <person name="Kohara Y."/>
            <person name="Sharp S."/>
            <person name="Simmonds M.N."/>
            <person name="Spiegler S."/>
            <person name="Tivey A."/>
            <person name="Sugano S."/>
            <person name="White B."/>
            <person name="Walker D."/>
            <person name="Woodward J.R."/>
            <person name="Winckler T."/>
            <person name="Tanaka Y."/>
            <person name="Shaulsky G."/>
            <person name="Schleicher M."/>
            <person name="Weinstock G.M."/>
            <person name="Rosenthal A."/>
            <person name="Cox E.C."/>
            <person name="Chisholm R.L."/>
            <person name="Gibbs R.A."/>
            <person name="Loomis W.F."/>
            <person name="Platzer M."/>
            <person name="Kay R.R."/>
            <person name="Williams J.G."/>
            <person name="Dear P.H."/>
            <person name="Noegel A.A."/>
            <person name="Barrell B.G."/>
            <person name="Kuspa A."/>
        </authorList>
    </citation>
    <scope>NUCLEOTIDE SEQUENCE [LARGE SCALE GENOMIC DNA]</scope>
    <source>
        <strain>AX4</strain>
    </source>
</reference>
<feature type="transit peptide" description="Mitochondrion" evidence="2">
    <location>
        <begin position="1"/>
        <end position="20"/>
    </location>
</feature>
<feature type="chain" id="PRO_0000327761" description="Probable valine--tRNA ligase, mitochondrial">
    <location>
        <begin position="21"/>
        <end position="1051"/>
    </location>
</feature>
<feature type="coiled-coil region" evidence="2">
    <location>
        <begin position="972"/>
        <end position="1019"/>
    </location>
</feature>
<feature type="short sequence motif" description="'HIGH' region" evidence="1">
    <location>
        <begin position="71"/>
        <end position="81"/>
    </location>
</feature>
<feature type="short sequence motif" description="'KMSKS' region" evidence="1">
    <location>
        <begin position="606"/>
        <end position="610"/>
    </location>
</feature>
<feature type="binding site" evidence="1">
    <location>
        <position position="609"/>
    </location>
    <ligand>
        <name>ATP</name>
        <dbReference type="ChEBI" id="CHEBI:30616"/>
    </ligand>
</feature>
<proteinExistence type="inferred from homology"/>
<sequence length="1051" mass="121425">MNKLLFLSKKSSTSNLYRFYSRAPINESSIKSSFDPKVVEEFKYKYWQDSGLFKPKSNNGGEKFSMVLPPPNVTGSLHIGHSLTTTIQDSLIRYNRMMGKEVLWVPGLDHSGIATQVAVEKELQVKQGKTRFDLGREKFLEQVFQWTDQYSSNINNQLKITGSSLDWSRSVFTLDEQRNDAVQTAFIRMFEMGLIYRSTRLVNWCPYLQSVISDIEVDHKVIEKPTMLKLKSRKKSVEVGAIHNIAYMMEDPMLAPLIVSTTRPETIFGDTGLAIHPLDERYKDYHGKFAIHPFNHERIPIVLDDILVNREMGTGVVKITPAHDFNDYQCGQRHSLPIVNILNSNGTLNENSTAEFEGVDRLDARSMVIEKLEQMGLYREKLAHPQTLSICSRSGDLLEPVLKPQWYVKCKDMADKSIEFVESGEIKIIPESFRADWSRWLTNIQDWCISRQLWWGNPIPAYRVIMIDKVTNEDLDIHLTETERLKQEKWVVGKNEKEARENVFKTYGIANAGEYRLEKDQDVLDTWFSSGLFPISSMGWPTATKNSDNDNDFSRFLPLDVMETGSDILFFWVARMVMMCSTLNNGEVPFKTILLHPMIRDSQGRKMSKSLGNVIDPLHVINGISLQDLKENLSKSNLSQQEKVTATKGLEKEFPQGIPQCGTDSLRFSLAQYPINGKDINLDISKIIGNRLFCNKLWNASKFVFNYLVNLNNLSINLYYNNNNNEKDQQQPFNYLESTTLIDKWILLKLSKLVEIVNESYKSNNLSIAAQSLYSFFQYDFCDIYIECIKADLSKPILSKQNEHSSLVLASVLDSYLRMLHPFMPFITEDLWQRLPKSKQQLEIANSIEIDDSLSIMISDYPNPSYKYHQLFKNQEIEIEKQVNLFLDTLKLIRSQKVSLGINEKTKLIIKLQIIGDDQILIKSSFNQLKDSFEKLLNSNLIIDENNNNDNNNNNDNNDLTNISINKFTISKELQISIEFDKEINNQLNQKLINPNQSNDKKILKLENFIKQLQDEIDNPDFKQRVPEKVQNIKIEKLNQYKIELKEIYKK</sequence>
<keyword id="KW-0030">Aminoacyl-tRNA synthetase</keyword>
<keyword id="KW-0067">ATP-binding</keyword>
<keyword id="KW-0175">Coiled coil</keyword>
<keyword id="KW-0436">Ligase</keyword>
<keyword id="KW-0496">Mitochondrion</keyword>
<keyword id="KW-0547">Nucleotide-binding</keyword>
<keyword id="KW-0648">Protein biosynthesis</keyword>
<keyword id="KW-1185">Reference proteome</keyword>
<keyword id="KW-0809">Transit peptide</keyword>